<reference key="1">
    <citation type="journal article" date="2009" name="Nature">
        <title>Evolution of pathogenicity and sexual reproduction in eight Candida genomes.</title>
        <authorList>
            <person name="Butler G."/>
            <person name="Rasmussen M.D."/>
            <person name="Lin M.F."/>
            <person name="Santos M.A.S."/>
            <person name="Sakthikumar S."/>
            <person name="Munro C.A."/>
            <person name="Rheinbay E."/>
            <person name="Grabherr M."/>
            <person name="Forche A."/>
            <person name="Reedy J.L."/>
            <person name="Agrafioti I."/>
            <person name="Arnaud M.B."/>
            <person name="Bates S."/>
            <person name="Brown A.J.P."/>
            <person name="Brunke S."/>
            <person name="Costanzo M.C."/>
            <person name="Fitzpatrick D.A."/>
            <person name="de Groot P.W.J."/>
            <person name="Harris D."/>
            <person name="Hoyer L.L."/>
            <person name="Hube B."/>
            <person name="Klis F.M."/>
            <person name="Kodira C."/>
            <person name="Lennard N."/>
            <person name="Logue M.E."/>
            <person name="Martin R."/>
            <person name="Neiman A.M."/>
            <person name="Nikolaou E."/>
            <person name="Quail M.A."/>
            <person name="Quinn J."/>
            <person name="Santos M.C."/>
            <person name="Schmitzberger F.F."/>
            <person name="Sherlock G."/>
            <person name="Shah P."/>
            <person name="Silverstein K.A.T."/>
            <person name="Skrzypek M.S."/>
            <person name="Soll D."/>
            <person name="Staggs R."/>
            <person name="Stansfield I."/>
            <person name="Stumpf M.P.H."/>
            <person name="Sudbery P.E."/>
            <person name="Srikantha T."/>
            <person name="Zeng Q."/>
            <person name="Berman J."/>
            <person name="Berriman M."/>
            <person name="Heitman J."/>
            <person name="Gow N.A.R."/>
            <person name="Lorenz M.C."/>
            <person name="Birren B.W."/>
            <person name="Kellis M."/>
            <person name="Cuomo C.A."/>
        </authorList>
    </citation>
    <scope>NUCLEOTIDE SEQUENCE [LARGE SCALE GENOMIC DNA]</scope>
    <source>
        <strain>ATCC 11503 / BCRC 21390 / CBS 2605 / JCM 1781 / NBRC 1676 / NRRL YB-4239</strain>
    </source>
</reference>
<gene>
    <name evidence="2" type="primary">YTM1</name>
    <name type="ORF">LELG_00425</name>
</gene>
<evidence type="ECO:0000250" key="1"/>
<evidence type="ECO:0000255" key="2">
    <source>
        <dbReference type="HAMAP-Rule" id="MF_03029"/>
    </source>
</evidence>
<evidence type="ECO:0000256" key="3">
    <source>
        <dbReference type="SAM" id="MobiDB-lite"/>
    </source>
</evidence>
<protein>
    <recommendedName>
        <fullName evidence="2">Ribosome biogenesis protein YTM1</fullName>
    </recommendedName>
</protein>
<comment type="function">
    <text evidence="2">Component of the NOP7 complex, which is required for maturation of the 25S and 5.8S ribosomal RNAs and formation of the 60S ribosome.</text>
</comment>
<comment type="subunit">
    <text evidence="2">Component of the NOP7 complex, composed of ERB1, NOP7 and YTM1. The complex is held together by ERB1, which interacts with NOP7 via its N-terminal domain and with YTM1 via a high-affinity interaction between the seven-bladed beta-propeller domains of the 2 proteins. The NOP7 complex associates with the 66S pre-ribosome. Interacts (via UBL domain) with MDN1 (via VWFA/MIDAS domain).</text>
</comment>
<comment type="subcellular location">
    <subcellularLocation>
        <location evidence="2">Nucleus</location>
        <location evidence="2">Nucleolus</location>
    </subcellularLocation>
    <subcellularLocation>
        <location evidence="2">Nucleus</location>
        <location evidence="2">Nucleoplasm</location>
    </subcellularLocation>
</comment>
<comment type="similarity">
    <text evidence="2">Belongs to the WD repeat WDR12/YTM1 family.</text>
</comment>
<organism>
    <name type="scientific">Lodderomyces elongisporus (strain ATCC 11503 / CBS 2605 / JCM 1781 / NBRC 1676 / NRRL YB-4239)</name>
    <name type="common">Yeast</name>
    <name type="synonym">Saccharomyces elongisporus</name>
    <dbReference type="NCBI Taxonomy" id="379508"/>
    <lineage>
        <taxon>Eukaryota</taxon>
        <taxon>Fungi</taxon>
        <taxon>Dikarya</taxon>
        <taxon>Ascomycota</taxon>
        <taxon>Saccharomycotina</taxon>
        <taxon>Pichiomycetes</taxon>
        <taxon>Debaryomycetaceae</taxon>
        <taxon>Candida/Lodderomyces clade</taxon>
        <taxon>Lodderomyces</taxon>
    </lineage>
</organism>
<name>YTM1_LODEL</name>
<feature type="chain" id="PRO_0000369591" description="Ribosome biogenesis protein YTM1">
    <location>
        <begin position="1"/>
        <end position="491"/>
    </location>
</feature>
<feature type="repeat" description="WD 1">
    <location>
        <begin position="128"/>
        <end position="167"/>
    </location>
</feature>
<feature type="repeat" description="WD 2">
    <location>
        <begin position="169"/>
        <end position="207"/>
    </location>
</feature>
<feature type="repeat" description="WD 3">
    <location>
        <begin position="241"/>
        <end position="280"/>
    </location>
</feature>
<feature type="repeat" description="WD 4">
    <location>
        <begin position="318"/>
        <end position="358"/>
    </location>
</feature>
<feature type="repeat" description="WD 5">
    <location>
        <begin position="360"/>
        <end position="399"/>
    </location>
</feature>
<feature type="repeat" description="WD 6">
    <location>
        <begin position="409"/>
        <end position="449"/>
    </location>
</feature>
<feature type="repeat" description="WD 7">
    <location>
        <begin position="456"/>
        <end position="491"/>
    </location>
</feature>
<feature type="region of interest" description="Ubiquitin-like (UBL) domain" evidence="2">
    <location>
        <begin position="8"/>
        <end position="103"/>
    </location>
</feature>
<feature type="region of interest" description="Sufficient for interaction with ERB1 and association with 66S pre-ribosomes" evidence="1">
    <location>
        <begin position="113"/>
        <end position="491"/>
    </location>
</feature>
<feature type="region of interest" description="Disordered" evidence="3">
    <location>
        <begin position="205"/>
        <end position="228"/>
    </location>
</feature>
<feature type="compositionally biased region" description="Acidic residues" evidence="3">
    <location>
        <begin position="207"/>
        <end position="225"/>
    </location>
</feature>
<keyword id="KW-0539">Nucleus</keyword>
<keyword id="KW-1185">Reference proteome</keyword>
<keyword id="KW-0677">Repeat</keyword>
<keyword id="KW-0690">Ribosome biogenesis</keyword>
<keyword id="KW-0698">rRNA processing</keyword>
<keyword id="KW-0853">WD repeat</keyword>
<sequence length="491" mass="54439">MSDDKNQIKIKFTTNESDESLKVEETPLYVPVTLKRYGLSEIVNHLLETQKALESESGEDDEERKPVPFNFLINGELLRTSISDYLTRNGLSSEAFLTIEYTRAILPPSFQASFQNDDWISSLDSINRNLSAVTSSQLTITNPKILSGSYDGIVKTYNMSGKVEKQYMGHSAAVKSVKWISPTRIVSCGNDQQVRLWKTAYEGVVDQNEEDEEENEANEGDDGDNDMEKIEDGKTLAILEGHKAPVVDLAVNQQTKRILSAGYDLNVGFWSTNYKDMAKISIPEYDSNVISTSSKKRRKLALQDATIRRRSPLSLLLGHTEPVEGVIFDELDATVGYSVSQDHTIKTWDLVTLRCVDTRTTGFSLLSILQLPQVNLIATGSSARHINLHDPRVSASNTNSEVVNTKLVGHTNFVVGLSASPHNSNMFASSSHDGTVKVWDIRADKSLYTITREDGSTKSKIFGVCWDSEIGLISGGEDKRVQINKGSDISK</sequence>
<proteinExistence type="inferred from homology"/>
<accession>A5DST9</accession>
<dbReference type="EMBL" id="CH981524">
    <property type="protein sequence ID" value="EDK42247.1"/>
    <property type="molecule type" value="Genomic_DNA"/>
</dbReference>
<dbReference type="RefSeq" id="XP_001527905.1">
    <property type="nucleotide sequence ID" value="XM_001527855.1"/>
</dbReference>
<dbReference type="SMR" id="A5DST9"/>
<dbReference type="FunCoup" id="A5DST9">
    <property type="interactions" value="907"/>
</dbReference>
<dbReference type="STRING" id="379508.A5DST9"/>
<dbReference type="GeneID" id="5235041"/>
<dbReference type="KEGG" id="lel:PVL30_000416"/>
<dbReference type="VEuPathDB" id="FungiDB:LELG_00425"/>
<dbReference type="eggNOG" id="KOG0313">
    <property type="taxonomic scope" value="Eukaryota"/>
</dbReference>
<dbReference type="HOGENOM" id="CLU_000288_57_0_1"/>
<dbReference type="InParanoid" id="A5DST9"/>
<dbReference type="OMA" id="DHKYVEF"/>
<dbReference type="OrthoDB" id="10251381at2759"/>
<dbReference type="Proteomes" id="UP000001996">
    <property type="component" value="Unassembled WGS sequence"/>
</dbReference>
<dbReference type="GO" id="GO:0005654">
    <property type="term" value="C:nucleoplasm"/>
    <property type="evidence" value="ECO:0007669"/>
    <property type="project" value="UniProtKB-SubCell"/>
</dbReference>
<dbReference type="GO" id="GO:0070545">
    <property type="term" value="C:PeBoW complex"/>
    <property type="evidence" value="ECO:0007669"/>
    <property type="project" value="EnsemblFungi"/>
</dbReference>
<dbReference type="GO" id="GO:0030687">
    <property type="term" value="C:preribosome, large subunit precursor"/>
    <property type="evidence" value="ECO:0007669"/>
    <property type="project" value="UniProtKB-UniRule"/>
</dbReference>
<dbReference type="GO" id="GO:0043021">
    <property type="term" value="F:ribonucleoprotein complex binding"/>
    <property type="evidence" value="ECO:0007669"/>
    <property type="project" value="UniProtKB-UniRule"/>
</dbReference>
<dbReference type="GO" id="GO:0051276">
    <property type="term" value="P:chromosome organization"/>
    <property type="evidence" value="ECO:0007669"/>
    <property type="project" value="EnsemblFungi"/>
</dbReference>
<dbReference type="GO" id="GO:0000466">
    <property type="term" value="P:maturation of 5.8S rRNA from tricistronic rRNA transcript (SSU-rRNA, 5.8S rRNA, LSU-rRNA)"/>
    <property type="evidence" value="ECO:0007669"/>
    <property type="project" value="UniProtKB-UniRule"/>
</dbReference>
<dbReference type="GO" id="GO:0000463">
    <property type="term" value="P:maturation of LSU-rRNA from tricistronic rRNA transcript (SSU-rRNA, 5.8S rRNA, LSU-rRNA)"/>
    <property type="evidence" value="ECO:0007669"/>
    <property type="project" value="UniProtKB-UniRule"/>
</dbReference>
<dbReference type="GO" id="GO:0110136">
    <property type="term" value="P:protein-RNA complex remodeling"/>
    <property type="evidence" value="ECO:0007669"/>
    <property type="project" value="EnsemblFungi"/>
</dbReference>
<dbReference type="CDD" id="cd00200">
    <property type="entry name" value="WD40"/>
    <property type="match status" value="1"/>
</dbReference>
<dbReference type="FunFam" id="2.130.10.10:FF:000706">
    <property type="entry name" value="Ribosome biogenesis protein YTM1"/>
    <property type="match status" value="1"/>
</dbReference>
<dbReference type="Gene3D" id="2.130.10.10">
    <property type="entry name" value="YVTN repeat-like/Quinoprotein amine dehydrogenase"/>
    <property type="match status" value="1"/>
</dbReference>
<dbReference type="HAMAP" id="MF_03029">
    <property type="entry name" value="WDR12"/>
    <property type="match status" value="1"/>
</dbReference>
<dbReference type="InterPro" id="IPR020472">
    <property type="entry name" value="G-protein_beta_WD-40_rep"/>
</dbReference>
<dbReference type="InterPro" id="IPR012972">
    <property type="entry name" value="NLE"/>
</dbReference>
<dbReference type="InterPro" id="IPR015943">
    <property type="entry name" value="WD40/YVTN_repeat-like_dom_sf"/>
</dbReference>
<dbReference type="InterPro" id="IPR036322">
    <property type="entry name" value="WD40_repeat_dom_sf"/>
</dbReference>
<dbReference type="InterPro" id="IPR001680">
    <property type="entry name" value="WD40_rpt"/>
</dbReference>
<dbReference type="InterPro" id="IPR028599">
    <property type="entry name" value="WDR12/Ytm1"/>
</dbReference>
<dbReference type="PANTHER" id="PTHR19855:SF11">
    <property type="entry name" value="RIBOSOME BIOGENESIS PROTEIN WDR12"/>
    <property type="match status" value="1"/>
</dbReference>
<dbReference type="PANTHER" id="PTHR19855">
    <property type="entry name" value="WD40 REPEAT PROTEIN 12, 37"/>
    <property type="match status" value="1"/>
</dbReference>
<dbReference type="Pfam" id="PF08154">
    <property type="entry name" value="NLE"/>
    <property type="match status" value="1"/>
</dbReference>
<dbReference type="Pfam" id="PF00400">
    <property type="entry name" value="WD40"/>
    <property type="match status" value="3"/>
</dbReference>
<dbReference type="PRINTS" id="PR00320">
    <property type="entry name" value="GPROTEINBRPT"/>
</dbReference>
<dbReference type="SMART" id="SM00320">
    <property type="entry name" value="WD40"/>
    <property type="match status" value="7"/>
</dbReference>
<dbReference type="SUPFAM" id="SSF50978">
    <property type="entry name" value="WD40 repeat-like"/>
    <property type="match status" value="1"/>
</dbReference>
<dbReference type="PROSITE" id="PS50082">
    <property type="entry name" value="WD_REPEATS_2"/>
    <property type="match status" value="4"/>
</dbReference>
<dbReference type="PROSITE" id="PS50294">
    <property type="entry name" value="WD_REPEATS_REGION"/>
    <property type="match status" value="3"/>
</dbReference>